<dbReference type="EC" id="2.7.1.35" evidence="1"/>
<dbReference type="EMBL" id="CP000036">
    <property type="protein sequence ID" value="ABB66115.1"/>
    <property type="molecule type" value="Genomic_DNA"/>
</dbReference>
<dbReference type="RefSeq" id="WP_001307229.1">
    <property type="nucleotide sequence ID" value="NC_007613.1"/>
</dbReference>
<dbReference type="SMR" id="Q320Z3"/>
<dbReference type="GeneID" id="75204481"/>
<dbReference type="KEGG" id="sbo:SBO_1498"/>
<dbReference type="HOGENOM" id="CLU_046496_3_0_6"/>
<dbReference type="UniPathway" id="UPA01068">
    <property type="reaction ID" value="UER00298"/>
</dbReference>
<dbReference type="Proteomes" id="UP000007067">
    <property type="component" value="Chromosome"/>
</dbReference>
<dbReference type="GO" id="GO:0005829">
    <property type="term" value="C:cytosol"/>
    <property type="evidence" value="ECO:0007669"/>
    <property type="project" value="TreeGrafter"/>
</dbReference>
<dbReference type="GO" id="GO:0005524">
    <property type="term" value="F:ATP binding"/>
    <property type="evidence" value="ECO:0007669"/>
    <property type="project" value="UniProtKB-UniRule"/>
</dbReference>
<dbReference type="GO" id="GO:0000287">
    <property type="term" value="F:magnesium ion binding"/>
    <property type="evidence" value="ECO:0007669"/>
    <property type="project" value="UniProtKB-UniRule"/>
</dbReference>
<dbReference type="GO" id="GO:0008478">
    <property type="term" value="F:pyridoxal kinase activity"/>
    <property type="evidence" value="ECO:0007669"/>
    <property type="project" value="UniProtKB-UniRule"/>
</dbReference>
<dbReference type="GO" id="GO:0009443">
    <property type="term" value="P:pyridoxal 5'-phosphate salvage"/>
    <property type="evidence" value="ECO:0007669"/>
    <property type="project" value="UniProtKB-UniRule"/>
</dbReference>
<dbReference type="CDD" id="cd01173">
    <property type="entry name" value="pyridoxal_pyridoxamine_kinase"/>
    <property type="match status" value="1"/>
</dbReference>
<dbReference type="FunFam" id="3.40.1190.20:FF:000008">
    <property type="entry name" value="Pyridoxal kinase PdxY"/>
    <property type="match status" value="1"/>
</dbReference>
<dbReference type="Gene3D" id="3.40.1190.20">
    <property type="match status" value="1"/>
</dbReference>
<dbReference type="HAMAP" id="MF_01639">
    <property type="entry name" value="PdxY"/>
    <property type="match status" value="1"/>
</dbReference>
<dbReference type="InterPro" id="IPR013749">
    <property type="entry name" value="PM/HMP-P_kinase-1"/>
</dbReference>
<dbReference type="InterPro" id="IPR004625">
    <property type="entry name" value="PyrdxlKinase"/>
</dbReference>
<dbReference type="InterPro" id="IPR023685">
    <property type="entry name" value="Pyridoxal_kinase_PdxY"/>
</dbReference>
<dbReference type="InterPro" id="IPR029056">
    <property type="entry name" value="Ribokinase-like"/>
</dbReference>
<dbReference type="NCBIfam" id="NF004398">
    <property type="entry name" value="PRK05756.1"/>
    <property type="match status" value="1"/>
</dbReference>
<dbReference type="NCBIfam" id="TIGR00687">
    <property type="entry name" value="pyridox_kin"/>
    <property type="match status" value="1"/>
</dbReference>
<dbReference type="PANTHER" id="PTHR10534">
    <property type="entry name" value="PYRIDOXAL KINASE"/>
    <property type="match status" value="1"/>
</dbReference>
<dbReference type="PANTHER" id="PTHR10534:SF2">
    <property type="entry name" value="PYRIDOXAL KINASE"/>
    <property type="match status" value="1"/>
</dbReference>
<dbReference type="Pfam" id="PF08543">
    <property type="entry name" value="Phos_pyr_kin"/>
    <property type="match status" value="1"/>
</dbReference>
<dbReference type="SUPFAM" id="SSF53613">
    <property type="entry name" value="Ribokinase-like"/>
    <property type="match status" value="1"/>
</dbReference>
<sequence>MMKNILAIQSHVVYGHAGNSAAEFPMRRLGANVWPLNTVQFSNHTQYGKWTGCVMPPSHLTEIVQGIAAIDKLHTCDAVLSGYLGSAEQGEHILGIVRQVKAANPQAKYFCDPVMGHPEKGCIVAPGVAEFHVRHGLPASDIIAPNLVELEILCEHAVNNVEEAVLAARELIAQGPQIVLVKHLARAGYSRDRFEMLLVTADEAWHISRPLVDFGMRQPVGVGDVTSGLLLVKLLQGATLQEALEHVTAAVYEIMVTTKAMQEYELQVVAAQDRIAKPEHYFSATKL</sequence>
<keyword id="KW-0067">ATP-binding</keyword>
<keyword id="KW-0418">Kinase</keyword>
<keyword id="KW-0460">Magnesium</keyword>
<keyword id="KW-0547">Nucleotide-binding</keyword>
<keyword id="KW-0808">Transferase</keyword>
<evidence type="ECO:0000255" key="1">
    <source>
        <dbReference type="HAMAP-Rule" id="MF_01639"/>
    </source>
</evidence>
<comment type="function">
    <text evidence="1">Pyridoxal kinase involved in the salvage pathway of pyridoxal 5'-phosphate (PLP). Catalyzes the phosphorylation of pyridoxal to PLP.</text>
</comment>
<comment type="catalytic activity">
    <reaction evidence="1">
        <text>pyridoxal + ATP = pyridoxal 5'-phosphate + ADP + H(+)</text>
        <dbReference type="Rhea" id="RHEA:10224"/>
        <dbReference type="ChEBI" id="CHEBI:15378"/>
        <dbReference type="ChEBI" id="CHEBI:17310"/>
        <dbReference type="ChEBI" id="CHEBI:30616"/>
        <dbReference type="ChEBI" id="CHEBI:456216"/>
        <dbReference type="ChEBI" id="CHEBI:597326"/>
        <dbReference type="EC" id="2.7.1.35"/>
    </reaction>
</comment>
<comment type="cofactor">
    <cofactor evidence="1">
        <name>Mg(2+)</name>
        <dbReference type="ChEBI" id="CHEBI:18420"/>
    </cofactor>
</comment>
<comment type="pathway">
    <text evidence="1">Cofactor metabolism; pyridoxal 5'-phosphate salvage; pyridoxal 5'-phosphate from pyridoxal: step 1/1.</text>
</comment>
<comment type="subunit">
    <text evidence="1">Homodimer.</text>
</comment>
<comment type="similarity">
    <text evidence="1">Belongs to the pyridoxine kinase family. PdxY subfamily.</text>
</comment>
<proteinExistence type="inferred from homology"/>
<name>PDXY_SHIBS</name>
<organism>
    <name type="scientific">Shigella boydii serotype 4 (strain Sb227)</name>
    <dbReference type="NCBI Taxonomy" id="300268"/>
    <lineage>
        <taxon>Bacteria</taxon>
        <taxon>Pseudomonadati</taxon>
        <taxon>Pseudomonadota</taxon>
        <taxon>Gammaproteobacteria</taxon>
        <taxon>Enterobacterales</taxon>
        <taxon>Enterobacteriaceae</taxon>
        <taxon>Shigella</taxon>
    </lineage>
</organism>
<feature type="chain" id="PRO_0000269830" description="Pyridoxal kinase PdxY">
    <location>
        <begin position="1"/>
        <end position="287"/>
    </location>
</feature>
<feature type="binding site" evidence="1">
    <location>
        <position position="10"/>
    </location>
    <ligand>
        <name>substrate</name>
    </ligand>
</feature>
<feature type="binding site" evidence="1">
    <location>
        <begin position="45"/>
        <end position="46"/>
    </location>
    <ligand>
        <name>substrate</name>
    </ligand>
</feature>
<feature type="binding site" evidence="1">
    <location>
        <position position="112"/>
    </location>
    <ligand>
        <name>ATP</name>
        <dbReference type="ChEBI" id="CHEBI:30616"/>
    </ligand>
</feature>
<feature type="binding site" evidence="1">
    <location>
        <position position="144"/>
    </location>
    <ligand>
        <name>ATP</name>
        <dbReference type="ChEBI" id="CHEBI:30616"/>
    </ligand>
</feature>
<feature type="binding site" evidence="1">
    <location>
        <position position="149"/>
    </location>
    <ligand>
        <name>ATP</name>
        <dbReference type="ChEBI" id="CHEBI:30616"/>
    </ligand>
</feature>
<feature type="binding site" evidence="1">
    <location>
        <position position="182"/>
    </location>
    <ligand>
        <name>ATP</name>
        <dbReference type="ChEBI" id="CHEBI:30616"/>
    </ligand>
</feature>
<feature type="binding site" evidence="1">
    <location>
        <begin position="209"/>
        <end position="212"/>
    </location>
    <ligand>
        <name>ATP</name>
        <dbReference type="ChEBI" id="CHEBI:30616"/>
    </ligand>
</feature>
<feature type="binding site" evidence="1">
    <location>
        <position position="224"/>
    </location>
    <ligand>
        <name>substrate</name>
    </ligand>
</feature>
<protein>
    <recommendedName>
        <fullName evidence="1">Pyridoxal kinase PdxY</fullName>
        <shortName evidence="1">PL kinase</shortName>
        <ecNumber evidence="1">2.7.1.35</ecNumber>
    </recommendedName>
</protein>
<gene>
    <name evidence="1" type="primary">pdxY</name>
    <name type="ordered locus">SBO_1498</name>
</gene>
<reference key="1">
    <citation type="journal article" date="2005" name="Nucleic Acids Res.">
        <title>Genome dynamics and diversity of Shigella species, the etiologic agents of bacillary dysentery.</title>
        <authorList>
            <person name="Yang F."/>
            <person name="Yang J."/>
            <person name="Zhang X."/>
            <person name="Chen L."/>
            <person name="Jiang Y."/>
            <person name="Yan Y."/>
            <person name="Tang X."/>
            <person name="Wang J."/>
            <person name="Xiong Z."/>
            <person name="Dong J."/>
            <person name="Xue Y."/>
            <person name="Zhu Y."/>
            <person name="Xu X."/>
            <person name="Sun L."/>
            <person name="Chen S."/>
            <person name="Nie H."/>
            <person name="Peng J."/>
            <person name="Xu J."/>
            <person name="Wang Y."/>
            <person name="Yuan Z."/>
            <person name="Wen Y."/>
            <person name="Yao Z."/>
            <person name="Shen Y."/>
            <person name="Qiang B."/>
            <person name="Hou Y."/>
            <person name="Yu J."/>
            <person name="Jin Q."/>
        </authorList>
    </citation>
    <scope>NUCLEOTIDE SEQUENCE [LARGE SCALE GENOMIC DNA]</scope>
    <source>
        <strain>Sb227</strain>
    </source>
</reference>
<accession>Q320Z3</accession>